<evidence type="ECO:0000255" key="1">
    <source>
        <dbReference type="HAMAP-Rule" id="MF_00374"/>
    </source>
</evidence>
<evidence type="ECO:0000305" key="2"/>
<accession>C0ZII8</accession>
<keyword id="KW-1185">Reference proteome</keyword>
<keyword id="KW-0687">Ribonucleoprotein</keyword>
<keyword id="KW-0689">Ribosomal protein</keyword>
<comment type="similarity">
    <text evidence="1">Belongs to the universal ribosomal protein uL29 family.</text>
</comment>
<organism>
    <name type="scientific">Brevibacillus brevis (strain 47 / JCM 6285 / NBRC 100599)</name>
    <dbReference type="NCBI Taxonomy" id="358681"/>
    <lineage>
        <taxon>Bacteria</taxon>
        <taxon>Bacillati</taxon>
        <taxon>Bacillota</taxon>
        <taxon>Bacilli</taxon>
        <taxon>Bacillales</taxon>
        <taxon>Paenibacillaceae</taxon>
        <taxon>Brevibacillus</taxon>
    </lineage>
</organism>
<reference key="1">
    <citation type="submission" date="2005-03" db="EMBL/GenBank/DDBJ databases">
        <title>Brevibacillus brevis strain 47, complete genome.</title>
        <authorList>
            <person name="Hosoyama A."/>
            <person name="Yamada R."/>
            <person name="Hongo Y."/>
            <person name="Terui Y."/>
            <person name="Ankai A."/>
            <person name="Masuyama W."/>
            <person name="Sekiguchi M."/>
            <person name="Takeda T."/>
            <person name="Asano K."/>
            <person name="Ohji S."/>
            <person name="Ichikawa N."/>
            <person name="Narita S."/>
            <person name="Aoki N."/>
            <person name="Miura H."/>
            <person name="Matsushita S."/>
            <person name="Sekigawa T."/>
            <person name="Yamagata H."/>
            <person name="Yoshikawa H."/>
            <person name="Udaka S."/>
            <person name="Tanikawa S."/>
            <person name="Fujita N."/>
        </authorList>
    </citation>
    <scope>NUCLEOTIDE SEQUENCE [LARGE SCALE GENOMIC DNA]</scope>
    <source>
        <strain>47 / JCM 6285 / NBRC 100599</strain>
    </source>
</reference>
<sequence length="65" mass="7521">MKANEYRNLTTAEIEQNVTSLKEELFNLRFQLATGQLETTSRIKQVRKDIARAKTVLRQRELGIG</sequence>
<gene>
    <name evidence="1" type="primary">rpmC</name>
    <name type="ordered locus">BBR47_02290</name>
</gene>
<feature type="chain" id="PRO_1000193998" description="Large ribosomal subunit protein uL29">
    <location>
        <begin position="1"/>
        <end position="65"/>
    </location>
</feature>
<protein>
    <recommendedName>
        <fullName evidence="1">Large ribosomal subunit protein uL29</fullName>
    </recommendedName>
    <alternativeName>
        <fullName evidence="2">50S ribosomal protein L29</fullName>
    </alternativeName>
</protein>
<proteinExistence type="inferred from homology"/>
<dbReference type="EMBL" id="AP008955">
    <property type="protein sequence ID" value="BAH41206.1"/>
    <property type="molecule type" value="Genomic_DNA"/>
</dbReference>
<dbReference type="RefSeq" id="WP_012683988.1">
    <property type="nucleotide sequence ID" value="NC_012491.1"/>
</dbReference>
<dbReference type="SMR" id="C0ZII8"/>
<dbReference type="STRING" id="358681.BBR47_02290"/>
<dbReference type="GeneID" id="87588863"/>
<dbReference type="KEGG" id="bbe:BBR47_02290"/>
<dbReference type="eggNOG" id="COG0255">
    <property type="taxonomic scope" value="Bacteria"/>
</dbReference>
<dbReference type="HOGENOM" id="CLU_158491_5_2_9"/>
<dbReference type="Proteomes" id="UP000001877">
    <property type="component" value="Chromosome"/>
</dbReference>
<dbReference type="GO" id="GO:0022625">
    <property type="term" value="C:cytosolic large ribosomal subunit"/>
    <property type="evidence" value="ECO:0007669"/>
    <property type="project" value="TreeGrafter"/>
</dbReference>
<dbReference type="GO" id="GO:0003735">
    <property type="term" value="F:structural constituent of ribosome"/>
    <property type="evidence" value="ECO:0007669"/>
    <property type="project" value="InterPro"/>
</dbReference>
<dbReference type="GO" id="GO:0006412">
    <property type="term" value="P:translation"/>
    <property type="evidence" value="ECO:0007669"/>
    <property type="project" value="UniProtKB-UniRule"/>
</dbReference>
<dbReference type="CDD" id="cd00427">
    <property type="entry name" value="Ribosomal_L29_HIP"/>
    <property type="match status" value="1"/>
</dbReference>
<dbReference type="FunFam" id="1.10.287.310:FF:000001">
    <property type="entry name" value="50S ribosomal protein L29"/>
    <property type="match status" value="1"/>
</dbReference>
<dbReference type="Gene3D" id="1.10.287.310">
    <property type="match status" value="1"/>
</dbReference>
<dbReference type="HAMAP" id="MF_00374">
    <property type="entry name" value="Ribosomal_uL29"/>
    <property type="match status" value="1"/>
</dbReference>
<dbReference type="InterPro" id="IPR050063">
    <property type="entry name" value="Ribosomal_protein_uL29"/>
</dbReference>
<dbReference type="InterPro" id="IPR001854">
    <property type="entry name" value="Ribosomal_uL29"/>
</dbReference>
<dbReference type="InterPro" id="IPR036049">
    <property type="entry name" value="Ribosomal_uL29_sf"/>
</dbReference>
<dbReference type="NCBIfam" id="TIGR00012">
    <property type="entry name" value="L29"/>
    <property type="match status" value="1"/>
</dbReference>
<dbReference type="PANTHER" id="PTHR10916">
    <property type="entry name" value="60S RIBOSOMAL PROTEIN L35/50S RIBOSOMAL PROTEIN L29"/>
    <property type="match status" value="1"/>
</dbReference>
<dbReference type="PANTHER" id="PTHR10916:SF0">
    <property type="entry name" value="LARGE RIBOSOMAL SUBUNIT PROTEIN UL29C"/>
    <property type="match status" value="1"/>
</dbReference>
<dbReference type="Pfam" id="PF00831">
    <property type="entry name" value="Ribosomal_L29"/>
    <property type="match status" value="1"/>
</dbReference>
<dbReference type="SUPFAM" id="SSF46561">
    <property type="entry name" value="Ribosomal protein L29 (L29p)"/>
    <property type="match status" value="1"/>
</dbReference>
<name>RL29_BREBN</name>